<protein>
    <recommendedName>
        <fullName>Metacaspase-1A</fullName>
        <ecNumber>3.4.22.-</ecNumber>
    </recommendedName>
</protein>
<comment type="function">
    <text evidence="1">Involved in cell death (apoptosis).</text>
</comment>
<comment type="similarity">
    <text evidence="4">Belongs to the peptidase C14B family.</text>
</comment>
<dbReference type="EC" id="3.4.22.-"/>
<dbReference type="EMBL" id="CM002236">
    <property type="protein sequence ID" value="EAA29413.2"/>
    <property type="molecule type" value="Genomic_DNA"/>
</dbReference>
<dbReference type="RefSeq" id="XP_958649.2">
    <property type="nucleotide sequence ID" value="XM_953556.3"/>
</dbReference>
<dbReference type="SMR" id="Q7S232"/>
<dbReference type="FunCoup" id="Q7S232">
    <property type="interactions" value="344"/>
</dbReference>
<dbReference type="STRING" id="367110.Q7S232"/>
<dbReference type="PaxDb" id="5141-EFNCRP00000009641"/>
<dbReference type="EnsemblFungi" id="EAA29413">
    <property type="protein sequence ID" value="EAA29413"/>
    <property type="gene ID" value="NCU09882"/>
</dbReference>
<dbReference type="GeneID" id="3874804"/>
<dbReference type="KEGG" id="ncr:NCU09882"/>
<dbReference type="VEuPathDB" id="FungiDB:NCU09882"/>
<dbReference type="HOGENOM" id="CLU_029389_0_0_1"/>
<dbReference type="InParanoid" id="Q7S232"/>
<dbReference type="OMA" id="IRMALQW"/>
<dbReference type="OrthoDB" id="3223806at2759"/>
<dbReference type="Proteomes" id="UP000001805">
    <property type="component" value="Chromosome 1, Linkage Group I"/>
</dbReference>
<dbReference type="GO" id="GO:0005737">
    <property type="term" value="C:cytoplasm"/>
    <property type="evidence" value="ECO:0000318"/>
    <property type="project" value="GO_Central"/>
</dbReference>
<dbReference type="GO" id="GO:0004197">
    <property type="term" value="F:cysteine-type endopeptidase activity"/>
    <property type="evidence" value="ECO:0000318"/>
    <property type="project" value="GO_Central"/>
</dbReference>
<dbReference type="GO" id="GO:0006915">
    <property type="term" value="P:apoptotic process"/>
    <property type="evidence" value="ECO:0007669"/>
    <property type="project" value="UniProtKB-KW"/>
</dbReference>
<dbReference type="GO" id="GO:0006508">
    <property type="term" value="P:proteolysis"/>
    <property type="evidence" value="ECO:0000318"/>
    <property type="project" value="GO_Central"/>
</dbReference>
<dbReference type="Gene3D" id="3.40.50.12660">
    <property type="match status" value="1"/>
</dbReference>
<dbReference type="InterPro" id="IPR029030">
    <property type="entry name" value="Caspase-like_dom_sf"/>
</dbReference>
<dbReference type="InterPro" id="IPR050452">
    <property type="entry name" value="Metacaspase"/>
</dbReference>
<dbReference type="InterPro" id="IPR011600">
    <property type="entry name" value="Pept_C14_caspase"/>
</dbReference>
<dbReference type="PANTHER" id="PTHR48104:SF30">
    <property type="entry name" value="METACASPASE-1"/>
    <property type="match status" value="1"/>
</dbReference>
<dbReference type="PANTHER" id="PTHR48104">
    <property type="entry name" value="METACASPASE-4"/>
    <property type="match status" value="1"/>
</dbReference>
<dbReference type="Pfam" id="PF00656">
    <property type="entry name" value="Peptidase_C14"/>
    <property type="match status" value="1"/>
</dbReference>
<dbReference type="SUPFAM" id="SSF52129">
    <property type="entry name" value="Caspase-like"/>
    <property type="match status" value="1"/>
</dbReference>
<sequence>MSYGYPGQGYGPGGGHHQPPPPQWDGQQQHHHQGGYGYSNPGQGQYNPQPPQDQGYGGYHQQPPQQYQQGSYNQGQYPPQGGYGGPYGQQQQHHQQGHSQRPPGPPPDGYDIYGYPIGSGHQTRNQGSHEIHEIPSGTQQFGHGAPEGYGFQYSNCSGRRKALLIGINYLGQDAELHGCINDTKNVSAFLVENYGYKREDMVILTDDATNPLLQPTKENILRAMQWLVAGAQPNDALFLHYSGHGGQTKDTDGDEDDGYDEVIYPVDFKTAGHIVDDQIHDTVVKPLQPGVRLTAIFDSCHSGSVLDLPYIYSTKGVIKEPNLAKEAGQGLLAAVGSYARGDIGGMASSLFSVAKTAFGGGNEAYERTKRTKTSPADVIMWSGSKDDQTSADATIASQATGAMSWAFITAIKANPKQSYVQLLNSIRDVLETKYTQKPQLSSSHPIDVDMLFVM</sequence>
<accession>Q7S232</accession>
<proteinExistence type="inferred from homology"/>
<gene>
    <name type="primary">casA</name>
    <name type="ORF">NCU09882</name>
</gene>
<feature type="propeptide" id="PRO_0000333660" evidence="2">
    <location>
        <begin position="1"/>
        <end status="unknown"/>
    </location>
</feature>
<feature type="chain" id="PRO_0000333661" description="Metacaspase-1A">
    <location>
        <begin status="unknown"/>
        <end position="454"/>
    </location>
</feature>
<feature type="region of interest" description="Disordered" evidence="3">
    <location>
        <begin position="1"/>
        <end position="129"/>
    </location>
</feature>
<feature type="compositionally biased region" description="Gly residues" evidence="3">
    <location>
        <begin position="1"/>
        <end position="16"/>
    </location>
</feature>
<feature type="compositionally biased region" description="Low complexity" evidence="3">
    <location>
        <begin position="38"/>
        <end position="47"/>
    </location>
</feature>
<feature type="compositionally biased region" description="Low complexity" evidence="3">
    <location>
        <begin position="59"/>
        <end position="80"/>
    </location>
</feature>
<feature type="compositionally biased region" description="Low complexity" evidence="3">
    <location>
        <begin position="88"/>
        <end position="101"/>
    </location>
</feature>
<feature type="compositionally biased region" description="Low complexity" evidence="3">
    <location>
        <begin position="109"/>
        <end position="120"/>
    </location>
</feature>
<feature type="active site" evidence="1">
    <location>
        <position position="244"/>
    </location>
</feature>
<feature type="active site" evidence="1">
    <location>
        <position position="300"/>
    </location>
</feature>
<organism>
    <name type="scientific">Neurospora crassa (strain ATCC 24698 / 74-OR23-1A / CBS 708.71 / DSM 1257 / FGSC 987)</name>
    <dbReference type="NCBI Taxonomy" id="367110"/>
    <lineage>
        <taxon>Eukaryota</taxon>
        <taxon>Fungi</taxon>
        <taxon>Dikarya</taxon>
        <taxon>Ascomycota</taxon>
        <taxon>Pezizomycotina</taxon>
        <taxon>Sordariomycetes</taxon>
        <taxon>Sordariomycetidae</taxon>
        <taxon>Sordariales</taxon>
        <taxon>Sordariaceae</taxon>
        <taxon>Neurospora</taxon>
    </lineage>
</organism>
<evidence type="ECO:0000250" key="1"/>
<evidence type="ECO:0000255" key="2"/>
<evidence type="ECO:0000256" key="3">
    <source>
        <dbReference type="SAM" id="MobiDB-lite"/>
    </source>
</evidence>
<evidence type="ECO:0000305" key="4"/>
<reference key="1">
    <citation type="journal article" date="2003" name="Nature">
        <title>The genome sequence of the filamentous fungus Neurospora crassa.</title>
        <authorList>
            <person name="Galagan J.E."/>
            <person name="Calvo S.E."/>
            <person name="Borkovich K.A."/>
            <person name="Selker E.U."/>
            <person name="Read N.D."/>
            <person name="Jaffe D.B."/>
            <person name="FitzHugh W."/>
            <person name="Ma L.-J."/>
            <person name="Smirnov S."/>
            <person name="Purcell S."/>
            <person name="Rehman B."/>
            <person name="Elkins T."/>
            <person name="Engels R."/>
            <person name="Wang S."/>
            <person name="Nielsen C.B."/>
            <person name="Butler J."/>
            <person name="Endrizzi M."/>
            <person name="Qui D."/>
            <person name="Ianakiev P."/>
            <person name="Bell-Pedersen D."/>
            <person name="Nelson M.A."/>
            <person name="Werner-Washburne M."/>
            <person name="Selitrennikoff C.P."/>
            <person name="Kinsey J.A."/>
            <person name="Braun E.L."/>
            <person name="Zelter A."/>
            <person name="Schulte U."/>
            <person name="Kothe G.O."/>
            <person name="Jedd G."/>
            <person name="Mewes H.-W."/>
            <person name="Staben C."/>
            <person name="Marcotte E."/>
            <person name="Greenberg D."/>
            <person name="Roy A."/>
            <person name="Foley K."/>
            <person name="Naylor J."/>
            <person name="Stange-Thomann N."/>
            <person name="Barrett R."/>
            <person name="Gnerre S."/>
            <person name="Kamal M."/>
            <person name="Kamvysselis M."/>
            <person name="Mauceli E.W."/>
            <person name="Bielke C."/>
            <person name="Rudd S."/>
            <person name="Frishman D."/>
            <person name="Krystofova S."/>
            <person name="Rasmussen C."/>
            <person name="Metzenberg R.L."/>
            <person name="Perkins D.D."/>
            <person name="Kroken S."/>
            <person name="Cogoni C."/>
            <person name="Macino G."/>
            <person name="Catcheside D.E.A."/>
            <person name="Li W."/>
            <person name="Pratt R.J."/>
            <person name="Osmani S.A."/>
            <person name="DeSouza C.P.C."/>
            <person name="Glass N.L."/>
            <person name="Orbach M.J."/>
            <person name="Berglund J.A."/>
            <person name="Voelker R."/>
            <person name="Yarden O."/>
            <person name="Plamann M."/>
            <person name="Seiler S."/>
            <person name="Dunlap J.C."/>
            <person name="Radford A."/>
            <person name="Aramayo R."/>
            <person name="Natvig D.O."/>
            <person name="Alex L.A."/>
            <person name="Mannhaupt G."/>
            <person name="Ebbole D.J."/>
            <person name="Freitag M."/>
            <person name="Paulsen I."/>
            <person name="Sachs M.S."/>
            <person name="Lander E.S."/>
            <person name="Nusbaum C."/>
            <person name="Birren B.W."/>
        </authorList>
    </citation>
    <scope>NUCLEOTIDE SEQUENCE [LARGE SCALE GENOMIC DNA]</scope>
    <source>
        <strain>ATCC 24698 / 74-OR23-1A / CBS 708.71 / DSM 1257 / FGSC 987</strain>
    </source>
</reference>
<keyword id="KW-0053">Apoptosis</keyword>
<keyword id="KW-0378">Hydrolase</keyword>
<keyword id="KW-0645">Protease</keyword>
<keyword id="KW-1185">Reference proteome</keyword>
<keyword id="KW-0788">Thiol protease</keyword>
<keyword id="KW-0865">Zymogen</keyword>
<name>MCA1A_NEUCR</name>